<sequence length="716" mass="81043">MSDSGASRLRRQLESGGFEARLYVKQLSQQSDGDRDLQEHRQRVQALAEETAQNLKRNVYQNYRQFIETAREISYLESEMYQLSHLLTEQKSSLESIPLALLPAAAAGASTGEDTAGAGPRERGAAQAGFLPGPAGVPREGPGTGEEGKQRTLTTLLEKVEGCRDLLETPGQYLVYNGDLVEYEADHMAQLQRVHGFLMNDCLLVATWLPQRRGMYRYNALYPLDRLAVVNVKDNPPMKDMFKLLMFPESRIFQAENAKIKREWLEVLEETKRALSDKRRREQEEAAALRAPPPVTSKGSNPFEDEAEEELATPEAEEEKVDLSMEWIQELPEDLDVCIAQRDFEGAVDLLDKLNHYLEDKPSPPSVKELRAKVDERVRQLTEVLVFELSPDRSLRGGPKATRRAVSQLIRLGQCTKACELFLRNRAAAVHTAIRQLRIEGATLLYIHKLCHVFFTSLLETAREFETDFAGTDSGCYSAFVVWARSAMGMFVDAFSKQVFDSKESLSTAAECVKVAKEHCQQLGEIGLDLTFIIHALLVKDIQGALLSYKEIIIEATKHRNSEEMWRRMNLMTPEALGKLKEEMRSCGVSNFEQYTGDDCWVNLSYTVVAFTKQTMGFLEEALKLYFPELHMVLLESLVEVILVAVQHVDYSLRCEQDPEKKTFIRQNASFLYDTVLPVVERRFEEGVGKPAKQLQDLRNASRLLRVNPESTTSVV</sequence>
<reference key="1">
    <citation type="journal article" date="1997" name="Proc. Natl. Acad. Sci. U.S.A.">
        <title>Subunit structure of the mammalian exocyst complex.</title>
        <authorList>
            <person name="Kee Y."/>
            <person name="Yoo J.-S."/>
            <person name="Hazuka C.D."/>
            <person name="Peterson K.E."/>
            <person name="Hsu S.-C."/>
            <person name="Scheller R.H."/>
        </authorList>
    </citation>
    <scope>NUCLEOTIDE SEQUENCE [MRNA]</scope>
    <scope>PARTIAL PROTEIN SEQUENCE</scope>
    <scope>IDENTIFICATION IN EXOCYST COMPLEX</scope>
    <source>
        <tissue>Brain</tissue>
    </source>
</reference>
<reference key="2">
    <citation type="journal article" date="2003" name="Hybrid. Hybridomics">
        <title>Immunological characterization of exocyst complex subunits in cell differentiation.</title>
        <authorList>
            <person name="Wang S."/>
            <person name="Hsu S.C."/>
        </authorList>
    </citation>
    <scope>SUBCELLULAR LOCATION</scope>
    <scope>INTERACTION WITH EXOC3 AND EXOC6</scope>
</reference>
<reference key="3">
    <citation type="journal article" date="2011" name="Mol. Cell">
        <title>SH3BP1, an exocyst-associated RhoGAP, inactivates Rac1 at the front to drive cell motility.</title>
        <authorList>
            <person name="Parrini M.C."/>
            <person name="Sadou-Dubourgnoux A."/>
            <person name="Aoki K."/>
            <person name="Kunida K."/>
            <person name="Biondini M."/>
            <person name="Hatzoglou A."/>
            <person name="Poullet P."/>
            <person name="Formstecher E."/>
            <person name="Yeaman C."/>
            <person name="Matsuda M."/>
            <person name="Rosse C."/>
            <person name="Camonis J."/>
        </authorList>
    </citation>
    <scope>SUBCELLULAR LOCATION</scope>
</reference>
<reference key="4">
    <citation type="journal article" date="2012" name="Nat. Commun.">
        <title>Quantitative maps of protein phosphorylation sites across 14 different rat organs and tissues.</title>
        <authorList>
            <person name="Lundby A."/>
            <person name="Secher A."/>
            <person name="Lage K."/>
            <person name="Nordsborg N.B."/>
            <person name="Dmytriyev A."/>
            <person name="Lundby C."/>
            <person name="Olsen J.V."/>
        </authorList>
    </citation>
    <scope>PHOSPHORYLATION [LARGE SCALE ANALYSIS] AT THR-313</scope>
    <scope>IDENTIFICATION BY MASS SPECTROMETRY [LARGE SCALE ANALYSIS]</scope>
</reference>
<reference key="5">
    <citation type="journal article" date="2005" name="EMBO J.">
        <title>Exo84 and Sec5 are competitive regulatory Sec6/8 effectors to the RalA GTPase.</title>
        <authorList>
            <person name="Jin R."/>
            <person name="Junutula J.R."/>
            <person name="Matern H.T."/>
            <person name="Ervin K.E."/>
            <person name="Scheller R.H."/>
            <person name="Brunger A.T."/>
        </authorList>
    </citation>
    <scope>X-RAY CRYSTALLOGRAPHY (2.5 ANGSTROMS) OF 167-286 IN COMPLEX WITH RALA</scope>
    <scope>MUTAGENESIS OF ALA-228 AND LYS-233</scope>
</reference>
<proteinExistence type="evidence at protein level"/>
<gene>
    <name type="primary">Exoc8</name>
    <name type="synonym">Exo84</name>
</gene>
<comment type="function">
    <text>Component of the exocyst complex involved in the docking of exocytic vesicles with fusion sites on the plasma membrane.</text>
</comment>
<comment type="subunit">
    <text evidence="2 5 6 8">The exocyst complex is composed of EXOC1, EXOC2, EXOC3, EXOC4, EXOC5, EXOC6, EXOC7 and EXOC8 (PubMed:12954101, PubMed:9405631). Interacts (via PH domain) with GTP-bound RALA and RALB (By similarity) (PubMed:15920473). Interacts with SH3BP1; required for the localization of both SH3BP1 and the exocyst to the leading edge of migrating cells (By similarity).</text>
</comment>
<comment type="subcellular location">
    <subcellularLocation>
        <location evidence="5">Cytoplasm</location>
    </subcellularLocation>
    <subcellularLocation>
        <location evidence="5">Cytoplasm</location>
        <location evidence="5">Perinuclear region</location>
    </subcellularLocation>
    <subcellularLocation>
        <location evidence="5">Cell projection</location>
        <location evidence="5">Growth cone</location>
    </subcellularLocation>
    <subcellularLocation>
        <location evidence="7">Cell projection</location>
    </subcellularLocation>
    <text evidence="1 5 7">Binds lipids with phosphatidylinositol 3,4,5-trisphosphate groups (By similarity). Perinuclear in undifferentiated PC12 cells. Redistributes to growing neurites and growth cones during NGF-induced neuronal differentiation (PubMed:12954101). Localizes at the leading edge of migrating cells (PubMed:21658605).</text>
</comment>
<comment type="similarity">
    <text evidence="9">Belongs to the EXO84 family.</text>
</comment>
<organism>
    <name type="scientific">Rattus norvegicus</name>
    <name type="common">Rat</name>
    <dbReference type="NCBI Taxonomy" id="10116"/>
    <lineage>
        <taxon>Eukaryota</taxon>
        <taxon>Metazoa</taxon>
        <taxon>Chordata</taxon>
        <taxon>Craniata</taxon>
        <taxon>Vertebrata</taxon>
        <taxon>Euteleostomi</taxon>
        <taxon>Mammalia</taxon>
        <taxon>Eutheria</taxon>
        <taxon>Euarchontoglires</taxon>
        <taxon>Glires</taxon>
        <taxon>Rodentia</taxon>
        <taxon>Myomorpha</taxon>
        <taxon>Muroidea</taxon>
        <taxon>Muridae</taxon>
        <taxon>Murinae</taxon>
        <taxon>Rattus</taxon>
    </lineage>
</organism>
<protein>
    <recommendedName>
        <fullName>Exocyst complex component 8</fullName>
    </recommendedName>
    <alternativeName>
        <fullName>Exocyst complex 84 kDa subunit</fullName>
    </alternativeName>
</protein>
<dbReference type="EMBL" id="AF032669">
    <property type="protein sequence ID" value="AAC01581.1"/>
    <property type="molecule type" value="mRNA"/>
</dbReference>
<dbReference type="PIR" id="T09222">
    <property type="entry name" value="T09222"/>
</dbReference>
<dbReference type="RefSeq" id="NP_620612.1">
    <property type="nucleotide sequence ID" value="NM_139043.2"/>
</dbReference>
<dbReference type="PDB" id="1ZC3">
    <property type="method" value="X-ray"/>
    <property type="resolution" value="2.00 A"/>
    <property type="chains" value="B/D=167-279"/>
</dbReference>
<dbReference type="PDB" id="1ZC4">
    <property type="method" value="X-ray"/>
    <property type="resolution" value="2.50 A"/>
    <property type="chains" value="B/D=167-286"/>
</dbReference>
<dbReference type="PDBsum" id="1ZC3"/>
<dbReference type="PDBsum" id="1ZC4"/>
<dbReference type="SMR" id="O54924"/>
<dbReference type="BioGRID" id="251437">
    <property type="interactions" value="1"/>
</dbReference>
<dbReference type="CORUM" id="O54924"/>
<dbReference type="FunCoup" id="O54924">
    <property type="interactions" value="4175"/>
</dbReference>
<dbReference type="STRING" id="10116.ENSRNOP00000026757"/>
<dbReference type="iPTMnet" id="O54924"/>
<dbReference type="PhosphoSitePlus" id="O54924"/>
<dbReference type="jPOST" id="O54924"/>
<dbReference type="PaxDb" id="10116-ENSRNOP00000026757"/>
<dbReference type="Ensembl" id="ENSRNOT00000026757.4">
    <property type="protein sequence ID" value="ENSRNOP00000026757.1"/>
    <property type="gene ID" value="ENSRNOG00000019766.4"/>
</dbReference>
<dbReference type="GeneID" id="245709"/>
<dbReference type="KEGG" id="rno:245709"/>
<dbReference type="UCSC" id="RGD:620245">
    <property type="organism name" value="rat"/>
</dbReference>
<dbReference type="AGR" id="RGD:620245"/>
<dbReference type="CTD" id="149371"/>
<dbReference type="RGD" id="620245">
    <property type="gene designation" value="Exoc8"/>
</dbReference>
<dbReference type="eggNOG" id="KOG2215">
    <property type="taxonomic scope" value="Eukaryota"/>
</dbReference>
<dbReference type="GeneTree" id="ENSGT00390000015936"/>
<dbReference type="HOGENOM" id="CLU_025760_0_0_1"/>
<dbReference type="InParanoid" id="O54924"/>
<dbReference type="OMA" id="AAWLPNR"/>
<dbReference type="OrthoDB" id="642193at2759"/>
<dbReference type="PhylomeDB" id="O54924"/>
<dbReference type="TreeFam" id="TF105819"/>
<dbReference type="Reactome" id="R-RNO-264876">
    <property type="pathway name" value="Insulin processing"/>
</dbReference>
<dbReference type="Reactome" id="R-RNO-5620916">
    <property type="pathway name" value="VxPx cargo-targeting to cilium"/>
</dbReference>
<dbReference type="EvolutionaryTrace" id="O54924"/>
<dbReference type="PRO" id="PR:O54924"/>
<dbReference type="Proteomes" id="UP000002494">
    <property type="component" value="Chromosome 19"/>
</dbReference>
<dbReference type="Bgee" id="ENSRNOG00000019766">
    <property type="expression patterns" value="Expressed in frontal cortex and 18 other cell types or tissues"/>
</dbReference>
<dbReference type="GO" id="GO:0031252">
    <property type="term" value="C:cell leading edge"/>
    <property type="evidence" value="ECO:0000314"/>
    <property type="project" value="UniProtKB"/>
</dbReference>
<dbReference type="GO" id="GO:0000145">
    <property type="term" value="C:exocyst"/>
    <property type="evidence" value="ECO:0000314"/>
    <property type="project" value="RGD"/>
</dbReference>
<dbReference type="GO" id="GO:0030426">
    <property type="term" value="C:growth cone"/>
    <property type="evidence" value="ECO:0007669"/>
    <property type="project" value="UniProtKB-SubCell"/>
</dbReference>
<dbReference type="GO" id="GO:0005770">
    <property type="term" value="C:late endosome"/>
    <property type="evidence" value="ECO:0000266"/>
    <property type="project" value="RGD"/>
</dbReference>
<dbReference type="GO" id="GO:0048471">
    <property type="term" value="C:perinuclear region of cytoplasm"/>
    <property type="evidence" value="ECO:0007669"/>
    <property type="project" value="UniProtKB-SubCell"/>
</dbReference>
<dbReference type="GO" id="GO:0035091">
    <property type="term" value="F:phosphatidylinositol binding"/>
    <property type="evidence" value="ECO:0000266"/>
    <property type="project" value="RGD"/>
</dbReference>
<dbReference type="GO" id="GO:0031267">
    <property type="term" value="F:small GTPase binding"/>
    <property type="evidence" value="ECO:0000266"/>
    <property type="project" value="RGD"/>
</dbReference>
<dbReference type="GO" id="GO:0007032">
    <property type="term" value="P:endosome organization"/>
    <property type="evidence" value="ECO:0000266"/>
    <property type="project" value="RGD"/>
</dbReference>
<dbReference type="GO" id="GO:0006887">
    <property type="term" value="P:exocytosis"/>
    <property type="evidence" value="ECO:0000266"/>
    <property type="project" value="RGD"/>
</dbReference>
<dbReference type="GO" id="GO:0022617">
    <property type="term" value="P:extracellular matrix disassembly"/>
    <property type="evidence" value="ECO:0000266"/>
    <property type="project" value="RGD"/>
</dbReference>
<dbReference type="GO" id="GO:0006893">
    <property type="term" value="P:Golgi to plasma membrane transport"/>
    <property type="evidence" value="ECO:0000318"/>
    <property type="project" value="GO_Central"/>
</dbReference>
<dbReference type="GO" id="GO:0008104">
    <property type="term" value="P:protein localization"/>
    <property type="evidence" value="ECO:0000318"/>
    <property type="project" value="GO_Central"/>
</dbReference>
<dbReference type="GO" id="GO:0015031">
    <property type="term" value="P:protein transport"/>
    <property type="evidence" value="ECO:0007669"/>
    <property type="project" value="UniProtKB-KW"/>
</dbReference>
<dbReference type="CDD" id="cd01226">
    <property type="entry name" value="PH_RalBD_exo84"/>
    <property type="match status" value="1"/>
</dbReference>
<dbReference type="FunFam" id="1.20.58.1220:FF:000002">
    <property type="entry name" value="Exocyst complex component 8"/>
    <property type="match status" value="1"/>
</dbReference>
<dbReference type="FunFam" id="2.30.29.30:FF:000180">
    <property type="entry name" value="Exocyst complex component 8"/>
    <property type="match status" value="1"/>
</dbReference>
<dbReference type="FunFam" id="1.20.58.1210:FF:000001">
    <property type="entry name" value="exocyst complex component 8"/>
    <property type="match status" value="1"/>
</dbReference>
<dbReference type="Gene3D" id="1.20.58.1220">
    <property type="entry name" value="Exo84p, C-terminal helical domain"/>
    <property type="match status" value="1"/>
</dbReference>
<dbReference type="Gene3D" id="1.20.58.1210">
    <property type="entry name" value="Exo84p, N-terminal helical domain"/>
    <property type="match status" value="1"/>
</dbReference>
<dbReference type="Gene3D" id="2.30.29.30">
    <property type="entry name" value="Pleckstrin-homology domain (PH domain)/Phosphotyrosine-binding domain (PTB)"/>
    <property type="match status" value="1"/>
</dbReference>
<dbReference type="InterPro" id="IPR016159">
    <property type="entry name" value="Cullin_repeat-like_dom_sf"/>
</dbReference>
<dbReference type="InterPro" id="IPR033961">
    <property type="entry name" value="Exo84"/>
</dbReference>
<dbReference type="InterPro" id="IPR032403">
    <property type="entry name" value="Exo84_C"/>
</dbReference>
<dbReference type="InterPro" id="IPR042561">
    <property type="entry name" value="Exo84_C_1"/>
</dbReference>
<dbReference type="InterPro" id="IPR042560">
    <property type="entry name" value="Exo84_C_2"/>
</dbReference>
<dbReference type="InterPro" id="IPR011993">
    <property type="entry name" value="PH-like_dom_sf"/>
</dbReference>
<dbReference type="InterPro" id="IPR001849">
    <property type="entry name" value="PH_domain"/>
</dbReference>
<dbReference type="PANTHER" id="PTHR21426">
    <property type="entry name" value="EXOCYST COMPLEX COMPONENT 8"/>
    <property type="match status" value="1"/>
</dbReference>
<dbReference type="PANTHER" id="PTHR21426:SF12">
    <property type="entry name" value="EXOCYST COMPLEX COMPONENT 8"/>
    <property type="match status" value="1"/>
</dbReference>
<dbReference type="Pfam" id="PF16528">
    <property type="entry name" value="Exo84_C"/>
    <property type="match status" value="1"/>
</dbReference>
<dbReference type="Pfam" id="PF08700">
    <property type="entry name" value="VPS51_Exo84_N"/>
    <property type="match status" value="1"/>
</dbReference>
<dbReference type="SMART" id="SM00233">
    <property type="entry name" value="PH"/>
    <property type="match status" value="1"/>
</dbReference>
<dbReference type="SUPFAM" id="SSF74788">
    <property type="entry name" value="Cullin repeat-like"/>
    <property type="match status" value="1"/>
</dbReference>
<dbReference type="SUPFAM" id="SSF50729">
    <property type="entry name" value="PH domain-like"/>
    <property type="match status" value="1"/>
</dbReference>
<dbReference type="PROSITE" id="PS50003">
    <property type="entry name" value="PH_DOMAIN"/>
    <property type="match status" value="1"/>
</dbReference>
<keyword id="KW-0002">3D-structure</keyword>
<keyword id="KW-0966">Cell projection</keyword>
<keyword id="KW-0963">Cytoplasm</keyword>
<keyword id="KW-0903">Direct protein sequencing</keyword>
<keyword id="KW-0268">Exocytosis</keyword>
<keyword id="KW-0597">Phosphoprotein</keyword>
<keyword id="KW-0653">Protein transport</keyword>
<keyword id="KW-1185">Reference proteome</keyword>
<keyword id="KW-0813">Transport</keyword>
<feature type="chain" id="PRO_0000227552" description="Exocyst complex component 8">
    <location>
        <begin position="1"/>
        <end position="716"/>
    </location>
</feature>
<feature type="domain" description="PH" evidence="3">
    <location>
        <begin position="173"/>
        <end position="273"/>
    </location>
</feature>
<feature type="region of interest" description="Disordered" evidence="4">
    <location>
        <begin position="110"/>
        <end position="149"/>
    </location>
</feature>
<feature type="region of interest" description="Disordered" evidence="4">
    <location>
        <begin position="275"/>
        <end position="319"/>
    </location>
</feature>
<feature type="compositionally biased region" description="Low complexity" evidence="4">
    <location>
        <begin position="110"/>
        <end position="119"/>
    </location>
</feature>
<feature type="compositionally biased region" description="Basic and acidic residues" evidence="4">
    <location>
        <begin position="275"/>
        <end position="284"/>
    </location>
</feature>
<feature type="compositionally biased region" description="Acidic residues" evidence="4">
    <location>
        <begin position="303"/>
        <end position="319"/>
    </location>
</feature>
<feature type="modified residue" description="Phosphoserine" evidence="2">
    <location>
        <position position="15"/>
    </location>
</feature>
<feature type="modified residue" description="Phosphothreonine" evidence="10">
    <location>
        <position position="313"/>
    </location>
</feature>
<feature type="mutagenesis site" description="Strongly reduces interaction with RALA." evidence="6">
    <original>A</original>
    <variation>W</variation>
    <location>
        <position position="228"/>
    </location>
</feature>
<feature type="mutagenesis site" description="Strongly reduces interaction with RALA." evidence="6">
    <original>K</original>
    <variation>W</variation>
    <location>
        <position position="233"/>
    </location>
</feature>
<feature type="strand" evidence="11">
    <location>
        <begin position="174"/>
        <end position="184"/>
    </location>
</feature>
<feature type="turn" evidence="11">
    <location>
        <begin position="185"/>
        <end position="187"/>
    </location>
</feature>
<feature type="strand" evidence="11">
    <location>
        <begin position="190"/>
        <end position="209"/>
    </location>
</feature>
<feature type="strand" evidence="11">
    <location>
        <begin position="216"/>
        <end position="223"/>
    </location>
</feature>
<feature type="turn" evidence="11">
    <location>
        <begin position="224"/>
        <end position="226"/>
    </location>
</feature>
<feature type="strand" evidence="11">
    <location>
        <begin position="228"/>
        <end position="232"/>
    </location>
</feature>
<feature type="strand" evidence="11">
    <location>
        <begin position="238"/>
        <end position="246"/>
    </location>
</feature>
<feature type="strand" evidence="11">
    <location>
        <begin position="249"/>
        <end position="254"/>
    </location>
</feature>
<feature type="helix" evidence="11">
    <location>
        <begin position="258"/>
        <end position="278"/>
    </location>
</feature>
<name>EXOC8_RAT</name>
<evidence type="ECO:0000250" key="1"/>
<evidence type="ECO:0000250" key="2">
    <source>
        <dbReference type="UniProtKB" id="Q8IYI6"/>
    </source>
</evidence>
<evidence type="ECO:0000255" key="3">
    <source>
        <dbReference type="PROSITE-ProRule" id="PRU00145"/>
    </source>
</evidence>
<evidence type="ECO:0000256" key="4">
    <source>
        <dbReference type="SAM" id="MobiDB-lite"/>
    </source>
</evidence>
<evidence type="ECO:0000269" key="5">
    <source>
    </source>
</evidence>
<evidence type="ECO:0000269" key="6">
    <source>
    </source>
</evidence>
<evidence type="ECO:0000269" key="7">
    <source>
    </source>
</evidence>
<evidence type="ECO:0000269" key="8">
    <source>
    </source>
</evidence>
<evidence type="ECO:0000305" key="9"/>
<evidence type="ECO:0007744" key="10">
    <source>
    </source>
</evidence>
<evidence type="ECO:0007829" key="11">
    <source>
        <dbReference type="PDB" id="1ZC3"/>
    </source>
</evidence>
<accession>O54924</accession>